<organism>
    <name type="scientific">Mus musculus</name>
    <name type="common">Mouse</name>
    <dbReference type="NCBI Taxonomy" id="10090"/>
    <lineage>
        <taxon>Eukaryota</taxon>
        <taxon>Metazoa</taxon>
        <taxon>Chordata</taxon>
        <taxon>Craniata</taxon>
        <taxon>Vertebrata</taxon>
        <taxon>Euteleostomi</taxon>
        <taxon>Mammalia</taxon>
        <taxon>Eutheria</taxon>
        <taxon>Euarchontoglires</taxon>
        <taxon>Glires</taxon>
        <taxon>Rodentia</taxon>
        <taxon>Myomorpha</taxon>
        <taxon>Muroidea</taxon>
        <taxon>Muridae</taxon>
        <taxon>Murinae</taxon>
        <taxon>Mus</taxon>
        <taxon>Mus</taxon>
    </lineage>
</organism>
<dbReference type="EC" id="1.1.1.45" evidence="4"/>
<dbReference type="EMBL" id="AF351609">
    <property type="protein sequence ID" value="AAM13398.1"/>
    <property type="status" value="ALT_FRAME"/>
    <property type="molecule type" value="mRNA"/>
</dbReference>
<dbReference type="EMBL" id="AK043569">
    <property type="protein sequence ID" value="BAC31583.1"/>
    <property type="molecule type" value="mRNA"/>
</dbReference>
<dbReference type="EMBL" id="AK080625">
    <property type="protein sequence ID" value="BAC37964.1"/>
    <property type="molecule type" value="mRNA"/>
</dbReference>
<dbReference type="EMBL" id="AK135834">
    <property type="protein sequence ID" value="BAE22682.1"/>
    <property type="molecule type" value="mRNA"/>
</dbReference>
<dbReference type="EMBL" id="BC004074">
    <property type="protein sequence ID" value="AAH04074.1"/>
    <property type="molecule type" value="mRNA"/>
</dbReference>
<dbReference type="EMBL" id="BC027064">
    <property type="protein sequence ID" value="AAH27064.1"/>
    <property type="molecule type" value="mRNA"/>
</dbReference>
<dbReference type="CCDS" id="CCDS27155.1"/>
<dbReference type="RefSeq" id="NP_084280.2">
    <property type="nucleotide sequence ID" value="NM_030004.3"/>
</dbReference>
<dbReference type="SMR" id="Q99KP3"/>
<dbReference type="FunCoup" id="Q99KP3">
    <property type="interactions" value="463"/>
</dbReference>
<dbReference type="STRING" id="10090.ENSMUSP00000022517"/>
<dbReference type="iPTMnet" id="Q99KP3"/>
<dbReference type="PhosphoSitePlus" id="Q99KP3"/>
<dbReference type="REPRODUCTION-2DPAGE" id="Q99KP3"/>
<dbReference type="jPOST" id="Q99KP3"/>
<dbReference type="PaxDb" id="10090-ENSMUSP00000022517"/>
<dbReference type="ProteomicsDB" id="285316"/>
<dbReference type="Pumba" id="Q99KP3"/>
<dbReference type="Antibodypedia" id="49573">
    <property type="antibodies" value="71 antibodies from 14 providers"/>
</dbReference>
<dbReference type="DNASU" id="68631"/>
<dbReference type="Ensembl" id="ENSMUST00000022517.9">
    <property type="protein sequence ID" value="ENSMUSP00000022517.8"/>
    <property type="gene ID" value="ENSMUSG00000021947.12"/>
</dbReference>
<dbReference type="GeneID" id="68631"/>
<dbReference type="KEGG" id="mmu:68631"/>
<dbReference type="UCSC" id="uc007ucz.1">
    <property type="organism name" value="mouse"/>
</dbReference>
<dbReference type="AGR" id="MGI:1915881"/>
<dbReference type="CTD" id="51084"/>
<dbReference type="MGI" id="MGI:1915881">
    <property type="gene designation" value="Cryl1"/>
</dbReference>
<dbReference type="VEuPathDB" id="HostDB:ENSMUSG00000021947"/>
<dbReference type="eggNOG" id="KOG2305">
    <property type="taxonomic scope" value="Eukaryota"/>
</dbReference>
<dbReference type="GeneTree" id="ENSGT00390000007182"/>
<dbReference type="HOGENOM" id="CLU_009834_0_0_1"/>
<dbReference type="InParanoid" id="Q99KP3"/>
<dbReference type="OMA" id="RDNCLTH"/>
<dbReference type="OrthoDB" id="2021159at2759"/>
<dbReference type="PhylomeDB" id="Q99KP3"/>
<dbReference type="TreeFam" id="TF313501"/>
<dbReference type="Reactome" id="R-MMU-5661270">
    <property type="pathway name" value="Formation of xylulose-5-phosphate"/>
</dbReference>
<dbReference type="BioGRID-ORCS" id="68631">
    <property type="hits" value="3 hits in 76 CRISPR screens"/>
</dbReference>
<dbReference type="ChiTaRS" id="Cryl1">
    <property type="organism name" value="mouse"/>
</dbReference>
<dbReference type="PRO" id="PR:Q99KP3"/>
<dbReference type="Proteomes" id="UP000000589">
    <property type="component" value="Chromosome 14"/>
</dbReference>
<dbReference type="RNAct" id="Q99KP3">
    <property type="molecule type" value="protein"/>
</dbReference>
<dbReference type="Bgee" id="ENSMUSG00000021947">
    <property type="expression patterns" value="Expressed in right kidney and 245 other cell types or tissues"/>
</dbReference>
<dbReference type="ExpressionAtlas" id="Q99KP3">
    <property type="expression patterns" value="baseline and differential"/>
</dbReference>
<dbReference type="GO" id="GO:0005829">
    <property type="term" value="C:cytosol"/>
    <property type="evidence" value="ECO:0000314"/>
    <property type="project" value="MGI"/>
</dbReference>
<dbReference type="GO" id="GO:0050104">
    <property type="term" value="F:L-gulonate 3-dehydrogenase activity"/>
    <property type="evidence" value="ECO:0000250"/>
    <property type="project" value="UniProtKB"/>
</dbReference>
<dbReference type="GO" id="GO:0070403">
    <property type="term" value="F:NAD+ binding"/>
    <property type="evidence" value="ECO:0000250"/>
    <property type="project" value="UniProtKB"/>
</dbReference>
<dbReference type="GO" id="GO:0042803">
    <property type="term" value="F:protein homodimerization activity"/>
    <property type="evidence" value="ECO:0007669"/>
    <property type="project" value="Ensembl"/>
</dbReference>
<dbReference type="GO" id="GO:0019640">
    <property type="term" value="P:D-glucuronate catabolic process to D-xylulose 5-phosphate"/>
    <property type="evidence" value="ECO:0000314"/>
    <property type="project" value="MGI"/>
</dbReference>
<dbReference type="GO" id="GO:0006631">
    <property type="term" value="P:fatty acid metabolic process"/>
    <property type="evidence" value="ECO:0007669"/>
    <property type="project" value="InterPro"/>
</dbReference>
<dbReference type="FunFam" id="3.40.50.720:FF:000356">
    <property type="entry name" value="Lambda-crystallin homolog"/>
    <property type="match status" value="1"/>
</dbReference>
<dbReference type="FunFam" id="1.10.1040.10:FF:000023">
    <property type="entry name" value="lambda-crystallin homolog"/>
    <property type="match status" value="1"/>
</dbReference>
<dbReference type="Gene3D" id="1.10.1040.10">
    <property type="entry name" value="N-(1-d-carboxylethyl)-l-norvaline Dehydrogenase, domain 2"/>
    <property type="match status" value="1"/>
</dbReference>
<dbReference type="Gene3D" id="3.40.50.720">
    <property type="entry name" value="NAD(P)-binding Rossmann-like Domain"/>
    <property type="match status" value="1"/>
</dbReference>
<dbReference type="InterPro" id="IPR022694">
    <property type="entry name" value="3-OHacyl-CoA_DH"/>
</dbReference>
<dbReference type="InterPro" id="IPR006180">
    <property type="entry name" value="3-OHacyl-CoA_DH_CS"/>
</dbReference>
<dbReference type="InterPro" id="IPR006176">
    <property type="entry name" value="3-OHacyl-CoA_DH_NAD-bd"/>
</dbReference>
<dbReference type="InterPro" id="IPR006108">
    <property type="entry name" value="3HC_DH_C"/>
</dbReference>
<dbReference type="InterPro" id="IPR008927">
    <property type="entry name" value="6-PGluconate_DH-like_C_sf"/>
</dbReference>
<dbReference type="InterPro" id="IPR013328">
    <property type="entry name" value="6PGD_dom2"/>
</dbReference>
<dbReference type="InterPro" id="IPR036291">
    <property type="entry name" value="NAD(P)-bd_dom_sf"/>
</dbReference>
<dbReference type="PANTHER" id="PTHR48075">
    <property type="entry name" value="3-HYDROXYACYL-COA DEHYDROGENASE FAMILY PROTEIN"/>
    <property type="match status" value="1"/>
</dbReference>
<dbReference type="PANTHER" id="PTHR48075:SF1">
    <property type="entry name" value="LAMBDA-CRYSTALLIN HOMOLOG"/>
    <property type="match status" value="1"/>
</dbReference>
<dbReference type="Pfam" id="PF00725">
    <property type="entry name" value="3HCDH"/>
    <property type="match status" value="1"/>
</dbReference>
<dbReference type="Pfam" id="PF02737">
    <property type="entry name" value="3HCDH_N"/>
    <property type="match status" value="1"/>
</dbReference>
<dbReference type="PIRSF" id="PIRSF000105">
    <property type="entry name" value="HCDH"/>
    <property type="match status" value="1"/>
</dbReference>
<dbReference type="SUPFAM" id="SSF48179">
    <property type="entry name" value="6-phosphogluconate dehydrogenase C-terminal domain-like"/>
    <property type="match status" value="1"/>
</dbReference>
<dbReference type="SUPFAM" id="SSF51735">
    <property type="entry name" value="NAD(P)-binding Rossmann-fold domains"/>
    <property type="match status" value="1"/>
</dbReference>
<dbReference type="PROSITE" id="PS00067">
    <property type="entry name" value="3HCDH"/>
    <property type="match status" value="1"/>
</dbReference>
<sequence>MASPAAGGVVIVGSGLIGRSWAMLFASGGFKVKLYDIEQQQITDALENIRKEMKSLEQSGSLKGSLSAERQLSLISGCGNLAEAVEGAVHIQECVPENLELKKKIFAQLDRIVDDRVILSSSSSCLLPSKLFSGLAHVKQCIVAHPVNPPYYVPLVELVPHPETAPATMDRTYALMKKIGQSPVRVLKEIDGFVLNRLQYAVISEAWRLVEEEIVSPSDLDLVMSDGLGMRYAFIGPLETMHLNAEGVISYCERYSEGMKHVLSTFGPVPEFSGATVERVSEDMCMKVPDDPEHLAARRQWRDDCLMKLSILKYQMQPK</sequence>
<feature type="initiator methionine" description="Removed" evidence="2">
    <location>
        <position position="1"/>
    </location>
</feature>
<feature type="chain" id="PRO_0000109321" description="Lambda-crystallin homolog">
    <location>
        <begin position="2"/>
        <end position="319"/>
    </location>
</feature>
<feature type="binding site" evidence="1">
    <location>
        <begin position="16"/>
        <end position="17"/>
    </location>
    <ligand>
        <name>NAD(+)</name>
        <dbReference type="ChEBI" id="CHEBI:57540"/>
    </ligand>
</feature>
<feature type="binding site" evidence="1">
    <location>
        <position position="36"/>
    </location>
    <ligand>
        <name>NAD(+)</name>
        <dbReference type="ChEBI" id="CHEBI:57540"/>
    </ligand>
</feature>
<feature type="binding site" evidence="1">
    <location>
        <position position="97"/>
    </location>
    <ligand>
        <name>NAD(+)</name>
        <dbReference type="ChEBI" id="CHEBI:57540"/>
    </ligand>
</feature>
<feature type="binding site" evidence="1">
    <location>
        <position position="102"/>
    </location>
    <ligand>
        <name>NAD(+)</name>
        <dbReference type="ChEBI" id="CHEBI:57540"/>
    </ligand>
</feature>
<feature type="modified residue" description="N-acetylalanine" evidence="2">
    <location>
        <position position="2"/>
    </location>
</feature>
<feature type="modified residue" description="Phosphoserine" evidence="3">
    <location>
        <position position="3"/>
    </location>
</feature>
<comment type="function">
    <text evidence="4">Has high L-gulonate 3-dehydrogenase activity. It also exhibits low dehydrogenase activity toward L-3-hydroxybutyrate (HBA) and L-threonate.</text>
</comment>
<comment type="catalytic activity">
    <reaction evidence="4">
        <text>L-gulonate + NAD(+) = 3-dehydro-L-gulonate + NADH + H(+)</text>
        <dbReference type="Rhea" id="RHEA:12889"/>
        <dbReference type="ChEBI" id="CHEBI:13115"/>
        <dbReference type="ChEBI" id="CHEBI:15378"/>
        <dbReference type="ChEBI" id="CHEBI:57540"/>
        <dbReference type="ChEBI" id="CHEBI:57655"/>
        <dbReference type="ChEBI" id="CHEBI:57945"/>
        <dbReference type="EC" id="1.1.1.45"/>
    </reaction>
    <physiologicalReaction direction="left-to-right" evidence="4">
        <dbReference type="Rhea" id="RHEA:12890"/>
    </physiologicalReaction>
</comment>
<comment type="activity regulation">
    <text evidence="4">Inhibited by malonate.</text>
</comment>
<comment type="subunit">
    <text evidence="4">Homodimer.</text>
</comment>
<comment type="subcellular location">
    <subcellularLocation>
        <location evidence="2">Cytoplasm</location>
    </subcellularLocation>
</comment>
<comment type="tissue specificity">
    <text evidence="5">Widely expressed, with highest levels in liver. Undetectable in skeletal muscle.</text>
</comment>
<comment type="similarity">
    <text evidence="6">Belongs to the 3-hydroxyacyl-CoA dehydrogenase family.</text>
</comment>
<comment type="sequence caution" evidence="6">
    <conflict type="frameshift">
        <sequence resource="EMBL-CDS" id="AAM13398"/>
    </conflict>
</comment>
<name>CRYL1_MOUSE</name>
<evidence type="ECO:0000250" key="1"/>
<evidence type="ECO:0000250" key="2">
    <source>
        <dbReference type="UniProtKB" id="P14755"/>
    </source>
</evidence>
<evidence type="ECO:0000250" key="3">
    <source>
        <dbReference type="UniProtKB" id="Q811X6"/>
    </source>
</evidence>
<evidence type="ECO:0000250" key="4">
    <source>
        <dbReference type="UniProtKB" id="Q9Y2S2"/>
    </source>
</evidence>
<evidence type="ECO:0000269" key="5">
    <source>
    </source>
</evidence>
<evidence type="ECO:0000305" key="6"/>
<proteinExistence type="evidence at protein level"/>
<accession>Q99KP3</accession>
<accession>Q542R9</accession>
<accession>Q8R4W7</accession>
<gene>
    <name type="primary">Cryl1</name>
    <name type="synonym">Cry</name>
</gene>
<protein>
    <recommendedName>
        <fullName>Lambda-crystallin homolog</fullName>
        <ecNumber evidence="4">1.1.1.45</ecNumber>
    </recommendedName>
    <alternativeName>
        <fullName>L-gulonate 3-dehydrogenase</fullName>
        <shortName>Gul3DH</shortName>
    </alternativeName>
</protein>
<reference key="1">
    <citation type="journal article" date="2003" name="Gene">
        <title>Human CRYL1, a novel enzyme-crystallin overexpressed in liver and kidney and downregulated in 58% of liver cancer tissues from 60 Chinese patients, and four new homologs from other mammalians.</title>
        <authorList>
            <person name="Chen J."/>
            <person name="Yu L."/>
            <person name="Li D."/>
            <person name="Gao Q."/>
            <person name="Wang J."/>
            <person name="Huang X."/>
            <person name="Bi G."/>
            <person name="Wu H."/>
            <person name="Zhao S."/>
        </authorList>
    </citation>
    <scope>NUCLEOTIDE SEQUENCE [MRNA]</scope>
    <scope>TISSUE SPECIFICITY</scope>
</reference>
<reference key="2">
    <citation type="journal article" date="2005" name="Science">
        <title>The transcriptional landscape of the mammalian genome.</title>
        <authorList>
            <person name="Carninci P."/>
            <person name="Kasukawa T."/>
            <person name="Katayama S."/>
            <person name="Gough J."/>
            <person name="Frith M.C."/>
            <person name="Maeda N."/>
            <person name="Oyama R."/>
            <person name="Ravasi T."/>
            <person name="Lenhard B."/>
            <person name="Wells C."/>
            <person name="Kodzius R."/>
            <person name="Shimokawa K."/>
            <person name="Bajic V.B."/>
            <person name="Brenner S.E."/>
            <person name="Batalov S."/>
            <person name="Forrest A.R."/>
            <person name="Zavolan M."/>
            <person name="Davis M.J."/>
            <person name="Wilming L.G."/>
            <person name="Aidinis V."/>
            <person name="Allen J.E."/>
            <person name="Ambesi-Impiombato A."/>
            <person name="Apweiler R."/>
            <person name="Aturaliya R.N."/>
            <person name="Bailey T.L."/>
            <person name="Bansal M."/>
            <person name="Baxter L."/>
            <person name="Beisel K.W."/>
            <person name="Bersano T."/>
            <person name="Bono H."/>
            <person name="Chalk A.M."/>
            <person name="Chiu K.P."/>
            <person name="Choudhary V."/>
            <person name="Christoffels A."/>
            <person name="Clutterbuck D.R."/>
            <person name="Crowe M.L."/>
            <person name="Dalla E."/>
            <person name="Dalrymple B.P."/>
            <person name="de Bono B."/>
            <person name="Della Gatta G."/>
            <person name="di Bernardo D."/>
            <person name="Down T."/>
            <person name="Engstrom P."/>
            <person name="Fagiolini M."/>
            <person name="Faulkner G."/>
            <person name="Fletcher C.F."/>
            <person name="Fukushima T."/>
            <person name="Furuno M."/>
            <person name="Futaki S."/>
            <person name="Gariboldi M."/>
            <person name="Georgii-Hemming P."/>
            <person name="Gingeras T.R."/>
            <person name="Gojobori T."/>
            <person name="Green R.E."/>
            <person name="Gustincich S."/>
            <person name="Harbers M."/>
            <person name="Hayashi Y."/>
            <person name="Hensch T.K."/>
            <person name="Hirokawa N."/>
            <person name="Hill D."/>
            <person name="Huminiecki L."/>
            <person name="Iacono M."/>
            <person name="Ikeo K."/>
            <person name="Iwama A."/>
            <person name="Ishikawa T."/>
            <person name="Jakt M."/>
            <person name="Kanapin A."/>
            <person name="Katoh M."/>
            <person name="Kawasawa Y."/>
            <person name="Kelso J."/>
            <person name="Kitamura H."/>
            <person name="Kitano H."/>
            <person name="Kollias G."/>
            <person name="Krishnan S.P."/>
            <person name="Kruger A."/>
            <person name="Kummerfeld S.K."/>
            <person name="Kurochkin I.V."/>
            <person name="Lareau L.F."/>
            <person name="Lazarevic D."/>
            <person name="Lipovich L."/>
            <person name="Liu J."/>
            <person name="Liuni S."/>
            <person name="McWilliam S."/>
            <person name="Madan Babu M."/>
            <person name="Madera M."/>
            <person name="Marchionni L."/>
            <person name="Matsuda H."/>
            <person name="Matsuzawa S."/>
            <person name="Miki H."/>
            <person name="Mignone F."/>
            <person name="Miyake S."/>
            <person name="Morris K."/>
            <person name="Mottagui-Tabar S."/>
            <person name="Mulder N."/>
            <person name="Nakano N."/>
            <person name="Nakauchi H."/>
            <person name="Ng P."/>
            <person name="Nilsson R."/>
            <person name="Nishiguchi S."/>
            <person name="Nishikawa S."/>
            <person name="Nori F."/>
            <person name="Ohara O."/>
            <person name="Okazaki Y."/>
            <person name="Orlando V."/>
            <person name="Pang K.C."/>
            <person name="Pavan W.J."/>
            <person name="Pavesi G."/>
            <person name="Pesole G."/>
            <person name="Petrovsky N."/>
            <person name="Piazza S."/>
            <person name="Reed J."/>
            <person name="Reid J.F."/>
            <person name="Ring B.Z."/>
            <person name="Ringwald M."/>
            <person name="Rost B."/>
            <person name="Ruan Y."/>
            <person name="Salzberg S.L."/>
            <person name="Sandelin A."/>
            <person name="Schneider C."/>
            <person name="Schoenbach C."/>
            <person name="Sekiguchi K."/>
            <person name="Semple C.A."/>
            <person name="Seno S."/>
            <person name="Sessa L."/>
            <person name="Sheng Y."/>
            <person name="Shibata Y."/>
            <person name="Shimada H."/>
            <person name="Shimada K."/>
            <person name="Silva D."/>
            <person name="Sinclair B."/>
            <person name="Sperling S."/>
            <person name="Stupka E."/>
            <person name="Sugiura K."/>
            <person name="Sultana R."/>
            <person name="Takenaka Y."/>
            <person name="Taki K."/>
            <person name="Tammoja K."/>
            <person name="Tan S.L."/>
            <person name="Tang S."/>
            <person name="Taylor M.S."/>
            <person name="Tegner J."/>
            <person name="Teichmann S.A."/>
            <person name="Ueda H.R."/>
            <person name="van Nimwegen E."/>
            <person name="Verardo R."/>
            <person name="Wei C.L."/>
            <person name="Yagi K."/>
            <person name="Yamanishi H."/>
            <person name="Zabarovsky E."/>
            <person name="Zhu S."/>
            <person name="Zimmer A."/>
            <person name="Hide W."/>
            <person name="Bult C."/>
            <person name="Grimmond S.M."/>
            <person name="Teasdale R.D."/>
            <person name="Liu E.T."/>
            <person name="Brusic V."/>
            <person name="Quackenbush J."/>
            <person name="Wahlestedt C."/>
            <person name="Mattick J.S."/>
            <person name="Hume D.A."/>
            <person name="Kai C."/>
            <person name="Sasaki D."/>
            <person name="Tomaru Y."/>
            <person name="Fukuda S."/>
            <person name="Kanamori-Katayama M."/>
            <person name="Suzuki M."/>
            <person name="Aoki J."/>
            <person name="Arakawa T."/>
            <person name="Iida J."/>
            <person name="Imamura K."/>
            <person name="Itoh M."/>
            <person name="Kato T."/>
            <person name="Kawaji H."/>
            <person name="Kawagashira N."/>
            <person name="Kawashima T."/>
            <person name="Kojima M."/>
            <person name="Kondo S."/>
            <person name="Konno H."/>
            <person name="Nakano K."/>
            <person name="Ninomiya N."/>
            <person name="Nishio T."/>
            <person name="Okada M."/>
            <person name="Plessy C."/>
            <person name="Shibata K."/>
            <person name="Shiraki T."/>
            <person name="Suzuki S."/>
            <person name="Tagami M."/>
            <person name="Waki K."/>
            <person name="Watahiki A."/>
            <person name="Okamura-Oho Y."/>
            <person name="Suzuki H."/>
            <person name="Kawai J."/>
            <person name="Hayashizaki Y."/>
        </authorList>
    </citation>
    <scope>NUCLEOTIDE SEQUENCE [LARGE SCALE MRNA]</scope>
    <source>
        <strain>C57BL/6J</strain>
        <tissue>Brain cortex</tissue>
    </source>
</reference>
<reference key="3">
    <citation type="journal article" date="2004" name="Genome Res.">
        <title>The status, quality, and expansion of the NIH full-length cDNA project: the Mammalian Gene Collection (MGC).</title>
        <authorList>
            <consortium name="The MGC Project Team"/>
        </authorList>
    </citation>
    <scope>NUCLEOTIDE SEQUENCE [LARGE SCALE MRNA]</scope>
    <source>
        <strain>FVB/N</strain>
        <tissue>Mammary gland</tissue>
    </source>
</reference>
<reference key="4">
    <citation type="journal article" date="2010" name="Cell">
        <title>A tissue-specific atlas of mouse protein phosphorylation and expression.</title>
        <authorList>
            <person name="Huttlin E.L."/>
            <person name="Jedrychowski M.P."/>
            <person name="Elias J.E."/>
            <person name="Goswami T."/>
            <person name="Rad R."/>
            <person name="Beausoleil S.A."/>
            <person name="Villen J."/>
            <person name="Haas W."/>
            <person name="Sowa M.E."/>
            <person name="Gygi S.P."/>
        </authorList>
    </citation>
    <scope>IDENTIFICATION BY MASS SPECTROMETRY [LARGE SCALE ANALYSIS]</scope>
    <source>
        <tissue>Brain</tissue>
        <tissue>Heart</tissue>
        <tissue>Kidney</tissue>
        <tissue>Liver</tissue>
        <tissue>Lung</tissue>
        <tissue>Spleen</tissue>
        <tissue>Testis</tissue>
    </source>
</reference>
<keyword id="KW-0007">Acetylation</keyword>
<keyword id="KW-0963">Cytoplasm</keyword>
<keyword id="KW-0520">NAD</keyword>
<keyword id="KW-0560">Oxidoreductase</keyword>
<keyword id="KW-0597">Phosphoprotein</keyword>
<keyword id="KW-1185">Reference proteome</keyword>